<keyword id="KW-0002">3D-structure</keyword>
<keyword id="KW-0007">Acetylation</keyword>
<keyword id="KW-0496">Mitochondrion</keyword>
<keyword id="KW-1185">Reference proteome</keyword>
<keyword id="KW-0687">Ribonucleoprotein</keyword>
<keyword id="KW-0689">Ribosomal protein</keyword>
<keyword id="KW-0809">Transit peptide</keyword>
<protein>
    <recommendedName>
        <fullName evidence="5">Small ribosomal subunit protein uS7m</fullName>
    </recommendedName>
    <alternativeName>
        <fullName>28S ribosomal protein S7, mitochondrial</fullName>
        <shortName>MRP-S7</shortName>
        <shortName>S7mt</shortName>
    </alternativeName>
</protein>
<feature type="transit peptide" description="Mitochondrion" evidence="2">
    <location>
        <begin position="1"/>
        <end position="37"/>
    </location>
</feature>
<feature type="chain" id="PRO_0000273055" description="Small ribosomal subunit protein uS7m">
    <location>
        <begin position="38"/>
        <end position="242"/>
    </location>
</feature>
<feature type="modified residue" description="N6-acetyllysine" evidence="1">
    <location>
        <position position="228"/>
    </location>
</feature>
<feature type="turn" evidence="7">
    <location>
        <begin position="49"/>
        <end position="52"/>
    </location>
</feature>
<feature type="helix" evidence="7">
    <location>
        <begin position="59"/>
        <end position="68"/>
    </location>
</feature>
<feature type="turn" evidence="7">
    <location>
        <begin position="69"/>
        <end position="71"/>
    </location>
</feature>
<feature type="helix" evidence="7">
    <location>
        <begin position="89"/>
        <end position="98"/>
    </location>
</feature>
<feature type="helix" evidence="7">
    <location>
        <begin position="104"/>
        <end position="127"/>
    </location>
</feature>
<feature type="helix" evidence="7">
    <location>
        <begin position="131"/>
        <end position="136"/>
    </location>
</feature>
<feature type="helix" evidence="7">
    <location>
        <begin position="141"/>
        <end position="151"/>
    </location>
</feature>
<feature type="strand" evidence="7">
    <location>
        <begin position="156"/>
        <end position="165"/>
    </location>
</feature>
<feature type="strand" evidence="7">
    <location>
        <begin position="167"/>
        <end position="173"/>
    </location>
</feature>
<feature type="helix" evidence="7">
    <location>
        <begin position="176"/>
        <end position="193"/>
    </location>
</feature>
<feature type="helix" evidence="7">
    <location>
        <begin position="201"/>
        <end position="213"/>
    </location>
</feature>
<feature type="helix" evidence="7">
    <location>
        <begin position="218"/>
        <end position="231"/>
    </location>
</feature>
<feature type="helix" evidence="7">
    <location>
        <begin position="234"/>
        <end position="239"/>
    </location>
</feature>
<name>RT07_BOVIN</name>
<comment type="subunit">
    <text evidence="3 4">Component of the mitochondrial ribosome small subunit (28S) which comprises a 12S rRNA and about 30 distinct proteins.</text>
</comment>
<comment type="subcellular location">
    <subcellularLocation>
        <location evidence="3 4">Mitochondrion</location>
    </subcellularLocation>
</comment>
<comment type="similarity">
    <text evidence="5">Belongs to the universal ribosomal protein uS7 family.</text>
</comment>
<gene>
    <name type="primary">MRPS7</name>
</gene>
<evidence type="ECO:0000250" key="1">
    <source>
        <dbReference type="UniProtKB" id="Q9Y2R9"/>
    </source>
</evidence>
<evidence type="ECO:0000255" key="2"/>
<evidence type="ECO:0000269" key="3">
    <source>
    </source>
</evidence>
<evidence type="ECO:0000269" key="4">
    <source>
    </source>
</evidence>
<evidence type="ECO:0000305" key="5"/>
<evidence type="ECO:0007744" key="6">
    <source>
        <dbReference type="PDB" id="3JD5"/>
    </source>
</evidence>
<evidence type="ECO:0007829" key="7">
    <source>
        <dbReference type="PDB" id="6NEQ"/>
    </source>
</evidence>
<dbReference type="EMBL" id="BC102580">
    <property type="protein sequence ID" value="AAI02581.1"/>
    <property type="molecule type" value="mRNA"/>
</dbReference>
<dbReference type="RefSeq" id="NP_001029515.1">
    <property type="nucleotide sequence ID" value="NM_001034343.2"/>
</dbReference>
<dbReference type="PDB" id="3JD5">
    <property type="method" value="EM"/>
    <property type="resolution" value="7.00 A"/>
    <property type="chains" value="G=1-242"/>
</dbReference>
<dbReference type="PDB" id="6NEQ">
    <property type="method" value="EM"/>
    <property type="resolution" value="3.32 A"/>
    <property type="chains" value="G=1-242"/>
</dbReference>
<dbReference type="PDB" id="6NF8">
    <property type="method" value="EM"/>
    <property type="resolution" value="3.48 A"/>
    <property type="chains" value="G=1-242"/>
</dbReference>
<dbReference type="PDBsum" id="3JD5"/>
<dbReference type="PDBsum" id="6NEQ"/>
<dbReference type="PDBsum" id="6NF8"/>
<dbReference type="EMDB" id="EMD-9358"/>
<dbReference type="EMDB" id="EMD-9362"/>
<dbReference type="SMR" id="Q3T040"/>
<dbReference type="CORUM" id="Q3T040"/>
<dbReference type="FunCoup" id="Q3T040">
    <property type="interactions" value="1969"/>
</dbReference>
<dbReference type="IntAct" id="Q3T040">
    <property type="interactions" value="1"/>
</dbReference>
<dbReference type="STRING" id="9913.ENSBTAP00000021471"/>
<dbReference type="PaxDb" id="9913-ENSBTAP00000021471"/>
<dbReference type="Ensembl" id="ENSBTAT00000101534.1">
    <property type="protein sequence ID" value="ENSBTAP00000084255.1"/>
    <property type="gene ID" value="ENSBTAG00000016133.4"/>
</dbReference>
<dbReference type="GeneID" id="509115"/>
<dbReference type="KEGG" id="bta:509115"/>
<dbReference type="CTD" id="51081"/>
<dbReference type="VEuPathDB" id="HostDB:ENSBTAG00000016133"/>
<dbReference type="VGNC" id="VGNC:31677">
    <property type="gene designation" value="MRPS7"/>
</dbReference>
<dbReference type="eggNOG" id="KOG3291">
    <property type="taxonomic scope" value="Eukaryota"/>
</dbReference>
<dbReference type="GeneTree" id="ENSGT00390000014620"/>
<dbReference type="HOGENOM" id="CLU_072226_0_1_1"/>
<dbReference type="InParanoid" id="Q3T040"/>
<dbReference type="OMA" id="HELHKQC"/>
<dbReference type="OrthoDB" id="9972728at2759"/>
<dbReference type="TreeFam" id="TF105978"/>
<dbReference type="Reactome" id="R-BTA-5389840">
    <property type="pathway name" value="Mitochondrial translation elongation"/>
</dbReference>
<dbReference type="Reactome" id="R-BTA-5419276">
    <property type="pathway name" value="Mitochondrial translation termination"/>
</dbReference>
<dbReference type="Proteomes" id="UP000009136">
    <property type="component" value="Chromosome 19"/>
</dbReference>
<dbReference type="Bgee" id="ENSBTAG00000016133">
    <property type="expression patterns" value="Expressed in tongue muscle and 105 other cell types or tissues"/>
</dbReference>
<dbReference type="GO" id="GO:0005743">
    <property type="term" value="C:mitochondrial inner membrane"/>
    <property type="evidence" value="ECO:0000304"/>
    <property type="project" value="Reactome"/>
</dbReference>
<dbReference type="GO" id="GO:0005763">
    <property type="term" value="C:mitochondrial small ribosomal subunit"/>
    <property type="evidence" value="ECO:0000314"/>
    <property type="project" value="UniProtKB"/>
</dbReference>
<dbReference type="GO" id="GO:0005840">
    <property type="term" value="C:ribosome"/>
    <property type="evidence" value="ECO:0000318"/>
    <property type="project" value="GO_Central"/>
</dbReference>
<dbReference type="GO" id="GO:0003729">
    <property type="term" value="F:mRNA binding"/>
    <property type="evidence" value="ECO:0000318"/>
    <property type="project" value="GO_Central"/>
</dbReference>
<dbReference type="GO" id="GO:0019843">
    <property type="term" value="F:rRNA binding"/>
    <property type="evidence" value="ECO:0000318"/>
    <property type="project" value="GO_Central"/>
</dbReference>
<dbReference type="GO" id="GO:0003735">
    <property type="term" value="F:structural constituent of ribosome"/>
    <property type="evidence" value="ECO:0007005"/>
    <property type="project" value="UniProtKB"/>
</dbReference>
<dbReference type="GO" id="GO:0032543">
    <property type="term" value="P:mitochondrial translation"/>
    <property type="evidence" value="ECO:0007005"/>
    <property type="project" value="UniProtKB"/>
</dbReference>
<dbReference type="GO" id="GO:0000028">
    <property type="term" value="P:ribosomal small subunit assembly"/>
    <property type="evidence" value="ECO:0000318"/>
    <property type="project" value="GO_Central"/>
</dbReference>
<dbReference type="GO" id="GO:0006412">
    <property type="term" value="P:translation"/>
    <property type="evidence" value="ECO:0000318"/>
    <property type="project" value="GO_Central"/>
</dbReference>
<dbReference type="CDD" id="cd14870">
    <property type="entry name" value="uS7_Mitochondria_Mammalian"/>
    <property type="match status" value="1"/>
</dbReference>
<dbReference type="FunFam" id="1.10.455.10:FF:000004">
    <property type="entry name" value="28S ribosomal protein S7, mitochondrial"/>
    <property type="match status" value="1"/>
</dbReference>
<dbReference type="Gene3D" id="1.10.455.10">
    <property type="entry name" value="Ribosomal protein S7 domain"/>
    <property type="match status" value="1"/>
</dbReference>
<dbReference type="InterPro" id="IPR000235">
    <property type="entry name" value="Ribosomal_uS7"/>
</dbReference>
<dbReference type="InterPro" id="IPR023798">
    <property type="entry name" value="Ribosomal_uS7_dom"/>
</dbReference>
<dbReference type="InterPro" id="IPR036823">
    <property type="entry name" value="Ribosomal_uS7_dom_sf"/>
</dbReference>
<dbReference type="PANTHER" id="PTHR11205">
    <property type="entry name" value="RIBOSOMAL PROTEIN S7"/>
    <property type="match status" value="1"/>
</dbReference>
<dbReference type="Pfam" id="PF00177">
    <property type="entry name" value="Ribosomal_S7"/>
    <property type="match status" value="1"/>
</dbReference>
<dbReference type="SUPFAM" id="SSF47973">
    <property type="entry name" value="Ribosomal protein S7"/>
    <property type="match status" value="1"/>
</dbReference>
<accession>Q3T040</accession>
<reference key="1">
    <citation type="submission" date="2005-08" db="EMBL/GenBank/DDBJ databases">
        <authorList>
            <consortium name="NIH - Mammalian Gene Collection (MGC) project"/>
        </authorList>
    </citation>
    <scope>NUCLEOTIDE SEQUENCE [LARGE SCALE MRNA]</scope>
    <source>
        <strain>Crossbred X Angus</strain>
        <tissue>Ileum</tissue>
    </source>
</reference>
<reference key="2">
    <citation type="journal article" date="1999" name="Biochem. Biophys. Res. Commun.">
        <title>Identification of a mammalian mitochondrial homolog of ribosomal protein S7.</title>
        <authorList>
            <person name="Koc E.C."/>
            <person name="Blackburn K."/>
            <person name="Burkhart W."/>
            <person name="Spremulli L.L."/>
        </authorList>
    </citation>
    <scope>IDENTIFICATION BY MASS SPECTROMETRY</scope>
</reference>
<reference key="3">
    <citation type="journal article" date="2001" name="J. Biol. Chem.">
        <title>Proteomic analysis of the mammalian mitochondrial ribosome. Identification of protein components in the 28S small subunit.</title>
        <authorList>
            <person name="Suzuki T."/>
            <person name="Terasaki M."/>
            <person name="Takemoto-Hori C."/>
            <person name="Hanada T."/>
            <person name="Ueda T."/>
            <person name="Wada A."/>
            <person name="Watanabe K."/>
        </authorList>
    </citation>
    <scope>IDENTIFICATION BY MASS SPECTROMETRY</scope>
    <scope>IDENTIFICATION IN THE 28S MITOCHONDRIAL RIBOSOME</scope>
    <scope>SUBCELLULAR LOCATION</scope>
</reference>
<reference evidence="6" key="4">
    <citation type="journal article" date="2014" name="Proc. Natl. Acad. Sci. U.S.A.">
        <title>Cryo-EM structure of the small subunit of the mammalian mitochondrial ribosome.</title>
        <authorList>
            <person name="Kaushal P.S."/>
            <person name="Sharma M.R."/>
            <person name="Booth T.M."/>
            <person name="Haque E.M."/>
            <person name="Tung C.S."/>
            <person name="Sanbonmatsu K.Y."/>
            <person name="Spremulli L.L."/>
            <person name="Agrawal R.K."/>
        </authorList>
    </citation>
    <scope>STRUCTURE BY ELECTRON MICROSCOPY (7.00 ANGSTROMS)</scope>
    <scope>SUBCELLULAR LOCATION</scope>
    <scope>SUBUNIT</scope>
</reference>
<sequence length="242" mass="28130">MAAPTAKVSRGWSGLALGVRIAVLRLPGLTQVRWSRYGPEYQDPQIDKEYYRKPLAQLTEEETYERELRKTQVIKAAPATKTSSVFEDPVISKFTNMMMKGGNKILARSLMTQTLEAVKRKQFEKYHAASAEEQATVERNPYTIFHQALKNCEPVIGLVPILKGGHFYQVPVPLAERRRRFLAMKWMITECREKKPRRMLMPEKLSQELLEAFCNRGPVIKRKHDMHKMAEANRALAHYRWW</sequence>
<organism>
    <name type="scientific">Bos taurus</name>
    <name type="common">Bovine</name>
    <dbReference type="NCBI Taxonomy" id="9913"/>
    <lineage>
        <taxon>Eukaryota</taxon>
        <taxon>Metazoa</taxon>
        <taxon>Chordata</taxon>
        <taxon>Craniata</taxon>
        <taxon>Vertebrata</taxon>
        <taxon>Euteleostomi</taxon>
        <taxon>Mammalia</taxon>
        <taxon>Eutheria</taxon>
        <taxon>Laurasiatheria</taxon>
        <taxon>Artiodactyla</taxon>
        <taxon>Ruminantia</taxon>
        <taxon>Pecora</taxon>
        <taxon>Bovidae</taxon>
        <taxon>Bovinae</taxon>
        <taxon>Bos</taxon>
    </lineage>
</organism>
<proteinExistence type="evidence at protein level"/>